<protein>
    <recommendedName>
        <fullName evidence="14">Exonuclease 3'-5' domain-containing protein 2</fullName>
        <ecNumber evidence="6 9">3.1.11.1</ecNumber>
    </recommendedName>
    <alternativeName>
        <fullName evidence="15">3'-5' exoribonuclease EXD2</fullName>
        <ecNumber evidence="7 9">3.1.13.-</ecNumber>
    </alternativeName>
    <alternativeName>
        <fullName evidence="14">Exonuclease 3'-5' domain-like-containing protein 2</fullName>
    </alternativeName>
</protein>
<sequence>MSRQNLVALTVTTLLGVAVGGFVLWKGIQRRRRSKTSPVTQQPQQKVLGSRELPPPEDDQLHSSAPRSSWKERILKAKVVTVSQEAEWDQIEPLLRSELEDFPVLGIDCEWVNLEGKASPLSLLQMASPSGLCVLVRLPKLICGGKTLPRTLLDILADGTILKVGVGCSEDASKLLQDYGLVVRGCLDLRYLAMRQRNNLLCNGLSLKSLAETVLNFPLDKSLLLRCSNWDAETLTEDQVIYAARDAQISVALFLHLLGYPFSRNSPGEKNDDHSSWRKVLEKCQGVVDIPFRSKGMSRLGEEVNGEATESQQKPRNKKSKMDGMVPGNHQGRDPRKHKRKPLGVGYSARKSPLYDNCFLHAPDGQPLCTCDRRKAQWYLDKGIGELVSEEPFVVKLRFEPAGRPESPGDYYLMVKENLCVVCGKRDSYIRKNVIPHEYRKHFPIEMKDHNSHDVLLLCTSCHAISNYYDNHLKQQLAKEFQAPIGSEEGLRLLEDPERRQVRSGARALLNAESLPTQRKEELLQALREFYNTDVVTEEMLQEAASLETRISNENYVPHGLKVVQCHSQGGLRSLMQLESRWRQHFLDSMQPKHLPQQWSVDHNHQKLLRKFGEDLPIQLS</sequence>
<keyword id="KW-0002">3D-structure</keyword>
<keyword id="KW-0025">Alternative splicing</keyword>
<keyword id="KW-0158">Chromosome</keyword>
<keyword id="KW-0227">DNA damage</keyword>
<keyword id="KW-0234">DNA repair</keyword>
<keyword id="KW-0269">Exonuclease</keyword>
<keyword id="KW-0378">Hydrolase</keyword>
<keyword id="KW-0460">Magnesium</keyword>
<keyword id="KW-0464">Manganese</keyword>
<keyword id="KW-0472">Membrane</keyword>
<keyword id="KW-0479">Metal-binding</keyword>
<keyword id="KW-0496">Mitochondrion</keyword>
<keyword id="KW-1000">Mitochondrion outer membrane</keyword>
<keyword id="KW-0540">Nuclease</keyword>
<keyword id="KW-0539">Nucleus</keyword>
<keyword id="KW-1267">Proteomics identification</keyword>
<keyword id="KW-1185">Reference proteome</keyword>
<keyword id="KW-0812">Transmembrane</keyword>
<keyword id="KW-1133">Transmembrane helix</keyword>
<feature type="chain" id="PRO_0000089924" description="Exonuclease 3'-5' domain-containing protein 2">
    <location>
        <begin position="1"/>
        <end position="621"/>
    </location>
</feature>
<feature type="topological domain" description="Mitochondrial intermembrane" evidence="16">
    <location>
        <begin position="1"/>
        <end position="4"/>
    </location>
</feature>
<feature type="transmembrane region" description="Helical" evidence="1">
    <location>
        <begin position="5"/>
        <end position="25"/>
    </location>
</feature>
<feature type="topological domain" description="Cytoplasmic" evidence="16">
    <location>
        <begin position="26"/>
        <end position="621"/>
    </location>
</feature>
<feature type="domain" description="3'-5' exonuclease" evidence="1">
    <location>
        <begin position="155"/>
        <end position="247"/>
    </location>
</feature>
<feature type="region of interest" description="Disordered" evidence="2">
    <location>
        <begin position="34"/>
        <end position="68"/>
    </location>
</feature>
<feature type="region of interest" description="Disordered" evidence="2">
    <location>
        <begin position="299"/>
        <end position="343"/>
    </location>
</feature>
<feature type="compositionally biased region" description="Polar residues" evidence="2">
    <location>
        <begin position="36"/>
        <end position="47"/>
    </location>
</feature>
<feature type="binding site" evidence="9 18 20 21 23 24">
    <location>
        <position position="108"/>
    </location>
    <ligand>
        <name>a divalent metal cation</name>
        <dbReference type="ChEBI" id="CHEBI:60240"/>
        <label>1</label>
        <note>catalytic</note>
    </ligand>
</feature>
<feature type="binding site" evidence="9 19 20 21 22 23 24">
    <location>
        <position position="108"/>
    </location>
    <ligand>
        <name>a divalent metal cation</name>
        <dbReference type="ChEBI" id="CHEBI:60240"/>
        <label>2</label>
        <note>catalytic</note>
    </ligand>
</feature>
<feature type="binding site" evidence="9 18 20 21 23 24">
    <location>
        <position position="110"/>
    </location>
    <ligand>
        <name>a divalent metal cation</name>
        <dbReference type="ChEBI" id="CHEBI:60240"/>
        <label>1</label>
        <note>catalytic</note>
    </ligand>
</feature>
<feature type="binding site" evidence="9 18 20 21 23 24">
    <location>
        <position position="246"/>
    </location>
    <ligand>
        <name>a divalent metal cation</name>
        <dbReference type="ChEBI" id="CHEBI:60240"/>
        <label>1</label>
        <note>catalytic</note>
    </ligand>
</feature>
<feature type="splice variant" id="VSP_044367" description="In isoform 2." evidence="11 12 13">
    <location>
        <begin position="1"/>
        <end position="125"/>
    </location>
</feature>
<feature type="sequence variant" id="VAR_050980" description="In dbSNP:rs35010854.">
    <original>D</original>
    <variation>N</variation>
    <location>
        <position position="231"/>
    </location>
</feature>
<feature type="sequence variant" id="VAR_050981" description="In dbSNP:rs8007859." evidence="3 4">
    <original>Q</original>
    <variation>H</variation>
    <location>
        <position position="518"/>
    </location>
</feature>
<feature type="mutagenesis site" description="Loss of 3'-5' exonuclease activity. Impaired ability to stabilize and restart stalled replication forks in response to replication stress." evidence="6 10">
    <original>DCE</original>
    <variation>ACA</variation>
    <location>
        <begin position="108"/>
        <end position="110"/>
    </location>
</feature>
<feature type="mutagenesis site" description="Abolished exodeoxyribonuclease activity." evidence="9">
    <original>R</original>
    <variation>A</variation>
    <location>
        <position position="190"/>
    </location>
</feature>
<feature type="mutagenesis site" description="Impaired exonuclease activity." evidence="9">
    <original>R</original>
    <variation>A</variation>
    <location>
        <position position="195"/>
    </location>
</feature>
<feature type="mutagenesis site" description="Impaired exonuclease activity." evidence="9">
    <original>R</original>
    <variation>A</variation>
    <location>
        <position position="197"/>
    </location>
</feature>
<feature type="mutagenesis site" description="Impaired exonuclease activity." evidence="9">
    <original>K</original>
    <variation>A</variation>
    <location>
        <position position="221"/>
    </location>
</feature>
<feature type="mutagenesis site" description="Abolished exonuclease activity." evidence="9">
    <original>R</original>
    <variation>A</variation>
    <location>
        <position position="226"/>
    </location>
</feature>
<feature type="sequence conflict" description="In Ref. 2; CAD39094." evidence="15" ref="2">
    <original>V</original>
    <variation>G</variation>
    <location>
        <position position="287"/>
    </location>
</feature>
<feature type="strand" evidence="25">
    <location>
        <begin position="79"/>
        <end position="82"/>
    </location>
</feature>
<feature type="helix" evidence="25">
    <location>
        <begin position="85"/>
        <end position="98"/>
    </location>
</feature>
<feature type="strand" evidence="25">
    <location>
        <begin position="100"/>
        <end position="102"/>
    </location>
</feature>
<feature type="strand" evidence="25">
    <location>
        <begin position="104"/>
        <end position="110"/>
    </location>
</feature>
<feature type="strand" evidence="25">
    <location>
        <begin position="123"/>
        <end position="127"/>
    </location>
</feature>
<feature type="strand" evidence="25">
    <location>
        <begin position="133"/>
        <end position="136"/>
    </location>
</feature>
<feature type="helix" evidence="25">
    <location>
        <begin position="138"/>
        <end position="141"/>
    </location>
</feature>
<feature type="turn" evidence="25">
    <location>
        <begin position="143"/>
        <end position="145"/>
    </location>
</feature>
<feature type="helix" evidence="25">
    <location>
        <begin position="150"/>
        <end position="157"/>
    </location>
</feature>
<feature type="strand" evidence="25">
    <location>
        <begin position="161"/>
        <end position="167"/>
    </location>
</feature>
<feature type="helix" evidence="25">
    <location>
        <begin position="168"/>
        <end position="179"/>
    </location>
</feature>
<feature type="strand" evidence="25">
    <location>
        <begin position="186"/>
        <end position="188"/>
    </location>
</feature>
<feature type="helix" evidence="25">
    <location>
        <begin position="189"/>
        <end position="202"/>
    </location>
</feature>
<feature type="helix" evidence="25">
    <location>
        <begin position="207"/>
        <end position="215"/>
    </location>
</feature>
<feature type="helix" evidence="26">
    <location>
        <begin position="225"/>
        <end position="227"/>
    </location>
</feature>
<feature type="strand" evidence="26">
    <location>
        <begin position="232"/>
        <end position="234"/>
    </location>
</feature>
<feature type="helix" evidence="25">
    <location>
        <begin position="237"/>
        <end position="257"/>
    </location>
</feature>
<feature type="helix" evidence="25">
    <location>
        <begin position="276"/>
        <end position="284"/>
    </location>
</feature>
<feature type="helix" evidence="27">
    <location>
        <begin position="285"/>
        <end position="287"/>
    </location>
</feature>
<accession>Q9NVH0</accession>
<accession>B4DIH6</accession>
<accession>G5E947</accession>
<accession>Q6AWB6</accession>
<accession>Q8N3D3</accession>
<name>EXD2_HUMAN</name>
<proteinExistence type="evidence at protein level"/>
<dbReference type="EC" id="3.1.11.1" evidence="6 9"/>
<dbReference type="EC" id="3.1.13.-" evidence="7 9"/>
<dbReference type="EMBL" id="AK001600">
    <property type="protein sequence ID" value="BAA91781.1"/>
    <property type="molecule type" value="mRNA"/>
</dbReference>
<dbReference type="EMBL" id="AK295601">
    <property type="protein sequence ID" value="BAG58488.1"/>
    <property type="molecule type" value="mRNA"/>
</dbReference>
<dbReference type="EMBL" id="AL834434">
    <property type="protein sequence ID" value="CAD39094.2"/>
    <property type="molecule type" value="mRNA"/>
</dbReference>
<dbReference type="EMBL" id="BX647767">
    <property type="protein sequence ID" value="CAH10568.1"/>
    <property type="status" value="ALT_FRAME"/>
    <property type="molecule type" value="mRNA"/>
</dbReference>
<dbReference type="EMBL" id="AL359317">
    <property type="status" value="NOT_ANNOTATED_CDS"/>
    <property type="molecule type" value="Genomic_DNA"/>
</dbReference>
<dbReference type="EMBL" id="CH471061">
    <property type="protein sequence ID" value="EAW80985.1"/>
    <property type="molecule type" value="Genomic_DNA"/>
</dbReference>
<dbReference type="EMBL" id="BC001962">
    <property type="protein sequence ID" value="AAH01962.1"/>
    <property type="molecule type" value="mRNA"/>
</dbReference>
<dbReference type="CCDS" id="CCDS53902.1">
    <molecule id="Q9NVH0-1"/>
</dbReference>
<dbReference type="CCDS" id="CCDS9793.1">
    <molecule id="Q9NVH0-2"/>
</dbReference>
<dbReference type="RefSeq" id="NP_001180289.1">
    <molecule id="Q9NVH0-1"/>
    <property type="nucleotide sequence ID" value="NM_001193360.2"/>
</dbReference>
<dbReference type="RefSeq" id="NP_001180290.1">
    <molecule id="Q9NVH0-1"/>
    <property type="nucleotide sequence ID" value="NM_001193361.2"/>
</dbReference>
<dbReference type="RefSeq" id="NP_001180291.1">
    <molecule id="Q9NVH0-1"/>
    <property type="nucleotide sequence ID" value="NM_001193362.2"/>
</dbReference>
<dbReference type="RefSeq" id="NP_001180292.1">
    <molecule id="Q9NVH0-1"/>
    <property type="nucleotide sequence ID" value="NM_001193363.2"/>
</dbReference>
<dbReference type="RefSeq" id="NP_060669.1">
    <molecule id="Q9NVH0-2"/>
    <property type="nucleotide sequence ID" value="NM_018199.4"/>
</dbReference>
<dbReference type="RefSeq" id="XP_005267874.1">
    <molecule id="Q9NVH0-2"/>
    <property type="nucleotide sequence ID" value="XM_005267817.5"/>
</dbReference>
<dbReference type="RefSeq" id="XP_011535210.1">
    <molecule id="Q9NVH0-2"/>
    <property type="nucleotide sequence ID" value="XM_011536908.4"/>
</dbReference>
<dbReference type="RefSeq" id="XP_016876910.1">
    <molecule id="Q9NVH0-2"/>
    <property type="nucleotide sequence ID" value="XM_017021421.3"/>
</dbReference>
<dbReference type="PDB" id="6K17">
    <property type="method" value="X-ray"/>
    <property type="resolution" value="1.60 A"/>
    <property type="chains" value="A/B=76-295"/>
</dbReference>
<dbReference type="PDB" id="6K18">
    <property type="method" value="X-ray"/>
    <property type="resolution" value="2.30 A"/>
    <property type="chains" value="A/B=76-295"/>
</dbReference>
<dbReference type="PDB" id="6K19">
    <property type="method" value="X-ray"/>
    <property type="resolution" value="2.20 A"/>
    <property type="chains" value="A/B=76-295"/>
</dbReference>
<dbReference type="PDB" id="6K1A">
    <property type="method" value="X-ray"/>
    <property type="resolution" value="2.60 A"/>
    <property type="chains" value="A/B=76-295"/>
</dbReference>
<dbReference type="PDB" id="6K1B">
    <property type="method" value="X-ray"/>
    <property type="resolution" value="2.60 A"/>
    <property type="chains" value="A/B=76-295"/>
</dbReference>
<dbReference type="PDB" id="6K1C">
    <property type="method" value="X-ray"/>
    <property type="resolution" value="2.45 A"/>
    <property type="chains" value="A/B=76-295"/>
</dbReference>
<dbReference type="PDB" id="6K1D">
    <property type="method" value="X-ray"/>
    <property type="resolution" value="3.00 A"/>
    <property type="chains" value="A/B=76-295"/>
</dbReference>
<dbReference type="PDB" id="6K1E">
    <property type="method" value="X-ray"/>
    <property type="resolution" value="2.90 A"/>
    <property type="chains" value="A/B=76-295"/>
</dbReference>
<dbReference type="PDBsum" id="6K17"/>
<dbReference type="PDBsum" id="6K18"/>
<dbReference type="PDBsum" id="6K19"/>
<dbReference type="PDBsum" id="6K1A"/>
<dbReference type="PDBsum" id="6K1B"/>
<dbReference type="PDBsum" id="6K1C"/>
<dbReference type="PDBsum" id="6K1D"/>
<dbReference type="PDBsum" id="6K1E"/>
<dbReference type="SMR" id="Q9NVH0"/>
<dbReference type="BioGRID" id="120514">
    <property type="interactions" value="395"/>
</dbReference>
<dbReference type="DIP" id="DIP-61996N"/>
<dbReference type="FunCoup" id="Q9NVH0">
    <property type="interactions" value="1935"/>
</dbReference>
<dbReference type="IntAct" id="Q9NVH0">
    <property type="interactions" value="28"/>
</dbReference>
<dbReference type="MINT" id="Q9NVH0"/>
<dbReference type="STRING" id="9606.ENSP00000313140"/>
<dbReference type="GlyGen" id="Q9NVH0">
    <property type="glycosylation" value="1 site, 1 O-linked glycan (1 site)"/>
</dbReference>
<dbReference type="iPTMnet" id="Q9NVH0"/>
<dbReference type="PhosphoSitePlus" id="Q9NVH0"/>
<dbReference type="SwissPalm" id="Q9NVH0"/>
<dbReference type="BioMuta" id="EXD2"/>
<dbReference type="DMDM" id="410516875"/>
<dbReference type="jPOST" id="Q9NVH0"/>
<dbReference type="MassIVE" id="Q9NVH0"/>
<dbReference type="PaxDb" id="9606-ENSP00000313140"/>
<dbReference type="PeptideAtlas" id="Q9NVH0"/>
<dbReference type="ProteomicsDB" id="33827"/>
<dbReference type="ProteomicsDB" id="82795">
    <molecule id="Q9NVH0-1"/>
</dbReference>
<dbReference type="Pumba" id="Q9NVH0"/>
<dbReference type="TopDownProteomics" id="Q9NVH0-2">
    <molecule id="Q9NVH0-2"/>
</dbReference>
<dbReference type="Antibodypedia" id="123">
    <property type="antibodies" value="114 antibodies from 18 providers"/>
</dbReference>
<dbReference type="DNASU" id="55218"/>
<dbReference type="Ensembl" id="ENST00000312994.9">
    <molecule id="Q9NVH0-1"/>
    <property type="protein sequence ID" value="ENSP00000313140.5"/>
    <property type="gene ID" value="ENSG00000081177.19"/>
</dbReference>
<dbReference type="Ensembl" id="ENST00000409014.5">
    <molecule id="Q9NVH0-2"/>
    <property type="protein sequence ID" value="ENSP00000386915.1"/>
    <property type="gene ID" value="ENSG00000081177.19"/>
</dbReference>
<dbReference type="Ensembl" id="ENST00000409018.7">
    <molecule id="Q9NVH0-1"/>
    <property type="protein sequence ID" value="ENSP00000387331.3"/>
    <property type="gene ID" value="ENSG00000081177.19"/>
</dbReference>
<dbReference type="Ensembl" id="ENST00000409242.5">
    <molecule id="Q9NVH0-2"/>
    <property type="protein sequence ID" value="ENSP00000386839.1"/>
    <property type="gene ID" value="ENSG00000081177.19"/>
</dbReference>
<dbReference type="Ensembl" id="ENST00000409675.5">
    <molecule id="Q9NVH0-2"/>
    <property type="protein sequence ID" value="ENSP00000386762.1"/>
    <property type="gene ID" value="ENSG00000081177.19"/>
</dbReference>
<dbReference type="Ensembl" id="ENST00000409949.5">
    <molecule id="Q9NVH0-2"/>
    <property type="protein sequence ID" value="ENSP00000386632.1"/>
    <property type="gene ID" value="ENSG00000081177.19"/>
</dbReference>
<dbReference type="Ensembl" id="ENST00000685843.1">
    <molecule id="Q9NVH0-1"/>
    <property type="protein sequence ID" value="ENSP00000510642.1"/>
    <property type="gene ID" value="ENSG00000081177.19"/>
</dbReference>
<dbReference type="GeneID" id="55218"/>
<dbReference type="KEGG" id="hsa:55218"/>
<dbReference type="MANE-Select" id="ENST00000685843.1">
    <property type="protein sequence ID" value="ENSP00000510642.1"/>
    <property type="RefSeq nucleotide sequence ID" value="NM_001193360.2"/>
    <property type="RefSeq protein sequence ID" value="NP_001180289.1"/>
</dbReference>
<dbReference type="UCSC" id="uc001xkt.4">
    <molecule id="Q9NVH0-1"/>
    <property type="organism name" value="human"/>
</dbReference>
<dbReference type="AGR" id="HGNC:20217"/>
<dbReference type="CTD" id="55218"/>
<dbReference type="DisGeNET" id="55218"/>
<dbReference type="GeneCards" id="EXD2"/>
<dbReference type="HGNC" id="HGNC:20217">
    <property type="gene designation" value="EXD2"/>
</dbReference>
<dbReference type="HPA" id="ENSG00000081177">
    <property type="expression patterns" value="Low tissue specificity"/>
</dbReference>
<dbReference type="MIM" id="616940">
    <property type="type" value="gene"/>
</dbReference>
<dbReference type="neXtProt" id="NX_Q9NVH0"/>
<dbReference type="OpenTargets" id="ENSG00000081177"/>
<dbReference type="PharmGKB" id="PA164719421"/>
<dbReference type="VEuPathDB" id="HostDB:ENSG00000081177"/>
<dbReference type="eggNOG" id="KOG4373">
    <property type="taxonomic scope" value="Eukaryota"/>
</dbReference>
<dbReference type="GeneTree" id="ENSGT00390000014318"/>
<dbReference type="HOGENOM" id="CLU_019718_0_0_1"/>
<dbReference type="InParanoid" id="Q9NVH0"/>
<dbReference type="OMA" id="RYYQTPK"/>
<dbReference type="OrthoDB" id="1920326at2759"/>
<dbReference type="PAN-GO" id="Q9NVH0">
    <property type="GO annotations" value="3 GO annotations based on evolutionary models"/>
</dbReference>
<dbReference type="PhylomeDB" id="Q9NVH0"/>
<dbReference type="TreeFam" id="TF324246"/>
<dbReference type="PathwayCommons" id="Q9NVH0"/>
<dbReference type="SignaLink" id="Q9NVH0"/>
<dbReference type="BioGRID-ORCS" id="55218">
    <property type="hits" value="10 hits in 1147 CRISPR screens"/>
</dbReference>
<dbReference type="ChiTaRS" id="EXD2">
    <property type="organism name" value="human"/>
</dbReference>
<dbReference type="GenomeRNAi" id="55218"/>
<dbReference type="Pharos" id="Q9NVH0">
    <property type="development level" value="Tbio"/>
</dbReference>
<dbReference type="PRO" id="PR:Q9NVH0"/>
<dbReference type="Proteomes" id="UP000005640">
    <property type="component" value="Chromosome 14"/>
</dbReference>
<dbReference type="RNAct" id="Q9NVH0">
    <property type="molecule type" value="protein"/>
</dbReference>
<dbReference type="Bgee" id="ENSG00000081177">
    <property type="expression patterns" value="Expressed in cortical plate and 208 other cell types or tissues"/>
</dbReference>
<dbReference type="ExpressionAtlas" id="Q9NVH0">
    <property type="expression patterns" value="baseline and differential"/>
</dbReference>
<dbReference type="GO" id="GO:0005737">
    <property type="term" value="C:cytoplasm"/>
    <property type="evidence" value="ECO:0000318"/>
    <property type="project" value="GO_Central"/>
</dbReference>
<dbReference type="GO" id="GO:0045111">
    <property type="term" value="C:intermediate filament cytoskeleton"/>
    <property type="evidence" value="ECO:0000314"/>
    <property type="project" value="HPA"/>
</dbReference>
<dbReference type="GO" id="GO:0005759">
    <property type="term" value="C:mitochondrial matrix"/>
    <property type="evidence" value="ECO:0007669"/>
    <property type="project" value="UniProtKB-SubCell"/>
</dbReference>
<dbReference type="GO" id="GO:0005741">
    <property type="term" value="C:mitochondrial outer membrane"/>
    <property type="evidence" value="ECO:0000314"/>
    <property type="project" value="UniProtKB"/>
</dbReference>
<dbReference type="GO" id="GO:0005739">
    <property type="term" value="C:mitochondrion"/>
    <property type="evidence" value="ECO:0000314"/>
    <property type="project" value="HPA"/>
</dbReference>
<dbReference type="GO" id="GO:0005634">
    <property type="term" value="C:nucleus"/>
    <property type="evidence" value="ECO:0000318"/>
    <property type="project" value="GO_Central"/>
</dbReference>
<dbReference type="GO" id="GO:0090734">
    <property type="term" value="C:site of DNA damage"/>
    <property type="evidence" value="ECO:0000314"/>
    <property type="project" value="UniProtKB"/>
</dbReference>
<dbReference type="GO" id="GO:0008408">
    <property type="term" value="F:3'-5' exonuclease activity"/>
    <property type="evidence" value="ECO:0000314"/>
    <property type="project" value="UniProtKB"/>
</dbReference>
<dbReference type="GO" id="GO:0008296">
    <property type="term" value="F:3'-5'-DNA exonuclease activity"/>
    <property type="evidence" value="ECO:0000314"/>
    <property type="project" value="UniProtKB"/>
</dbReference>
<dbReference type="GO" id="GO:0000175">
    <property type="term" value="F:3'-5'-RNA exonuclease activity"/>
    <property type="evidence" value="ECO:0000314"/>
    <property type="project" value="UniProtKB"/>
</dbReference>
<dbReference type="GO" id="GO:0000287">
    <property type="term" value="F:magnesium ion binding"/>
    <property type="evidence" value="ECO:0000314"/>
    <property type="project" value="UniProtKB"/>
</dbReference>
<dbReference type="GO" id="GO:0030145">
    <property type="term" value="F:manganese ion binding"/>
    <property type="evidence" value="ECO:0000314"/>
    <property type="project" value="UniProtKB"/>
</dbReference>
<dbReference type="GO" id="GO:0003676">
    <property type="term" value="F:nucleic acid binding"/>
    <property type="evidence" value="ECO:0007669"/>
    <property type="project" value="InterPro"/>
</dbReference>
<dbReference type="GO" id="GO:0042803">
    <property type="term" value="F:protein homodimerization activity"/>
    <property type="evidence" value="ECO:0000314"/>
    <property type="project" value="UniProtKB"/>
</dbReference>
<dbReference type="GO" id="GO:0008310">
    <property type="term" value="F:single-stranded DNA 3'-5' DNA exonuclease activity"/>
    <property type="evidence" value="ECO:0000314"/>
    <property type="project" value="UniProtKB"/>
</dbReference>
<dbReference type="GO" id="GO:0000729">
    <property type="term" value="P:DNA double-strand break processing"/>
    <property type="evidence" value="ECO:0000314"/>
    <property type="project" value="UniProtKB"/>
</dbReference>
<dbReference type="GO" id="GO:0006302">
    <property type="term" value="P:double-strand break repair"/>
    <property type="evidence" value="ECO:0000314"/>
    <property type="project" value="UniProtKB"/>
</dbReference>
<dbReference type="GO" id="GO:0000724">
    <property type="term" value="P:double-strand break repair via homologous recombination"/>
    <property type="evidence" value="ECO:0000314"/>
    <property type="project" value="UniProtKB"/>
</dbReference>
<dbReference type="GO" id="GO:0090304">
    <property type="term" value="P:nucleic acid metabolic process"/>
    <property type="evidence" value="ECO:0000314"/>
    <property type="project" value="UniProtKB"/>
</dbReference>
<dbReference type="GO" id="GO:0031297">
    <property type="term" value="P:replication fork processing"/>
    <property type="evidence" value="ECO:0000315"/>
    <property type="project" value="UniProtKB"/>
</dbReference>
<dbReference type="CDD" id="cd06141">
    <property type="entry name" value="WRN_exo"/>
    <property type="match status" value="1"/>
</dbReference>
<dbReference type="FunFam" id="3.30.420.10:FF:000041">
    <property type="entry name" value="Exonuclease 3'-5' domain containing 2"/>
    <property type="match status" value="1"/>
</dbReference>
<dbReference type="Gene3D" id="3.30.420.10">
    <property type="entry name" value="Ribonuclease H-like superfamily/Ribonuclease H"/>
    <property type="match status" value="1"/>
</dbReference>
<dbReference type="InterPro" id="IPR002562">
    <property type="entry name" value="3'-5'_exonuclease_dom"/>
</dbReference>
<dbReference type="InterPro" id="IPR051132">
    <property type="entry name" value="3-5_Exonuclease_domain"/>
</dbReference>
<dbReference type="InterPro" id="IPR012337">
    <property type="entry name" value="RNaseH-like_sf"/>
</dbReference>
<dbReference type="InterPro" id="IPR036397">
    <property type="entry name" value="RNaseH_sf"/>
</dbReference>
<dbReference type="PANTHER" id="PTHR13620">
    <property type="entry name" value="3-5 EXONUCLEASE"/>
    <property type="match status" value="1"/>
</dbReference>
<dbReference type="PANTHER" id="PTHR13620:SF104">
    <property type="entry name" value="EXONUCLEASE 3'-5' DOMAIN-CONTAINING PROTEIN 2"/>
    <property type="match status" value="1"/>
</dbReference>
<dbReference type="Pfam" id="PF01612">
    <property type="entry name" value="DNA_pol_A_exo1"/>
    <property type="match status" value="1"/>
</dbReference>
<dbReference type="SMART" id="SM00474">
    <property type="entry name" value="35EXOc"/>
    <property type="match status" value="1"/>
</dbReference>
<dbReference type="SUPFAM" id="SSF53098">
    <property type="entry name" value="Ribonuclease H-like"/>
    <property type="match status" value="1"/>
</dbReference>
<comment type="function">
    <text evidence="5 6 7 9 10">Exonuclease that has both 3'-5' exoribonuclease and exodeoxyribonuclease activities, depending on the divalent metal cation used as cofactor (PubMed:29335528, PubMed:31127291). In presence of Mg(2+), only shows 3'-5' exoribonuclease activity, while it shows both exoribonuclease and exodeoxyribonuclease activities in presence of Mn(2+) (PubMed:29335528, PubMed:31127291). Acts as an exoribonuclease in mitochondrion, possibly by regulating ATP production and mitochondrial translation (PubMed:29335528). Also involved in the response to DNA damage (PubMed:26807646, PubMed:31255466). Acts as 3'-5' exodeoxyribonuclease for double-strand breaks resection and efficient homologous recombination (PubMed:20603073, PubMed:26807646). Plays a key role in controlling the initial steps of chromosomal break repair, it is recruited to chromatin in a damage-dependent manner and functionally interacts with the MRN complex to accelerate resection through its 3'-5' exonuclease activity, which efficiently processes double-stranded DNA substrates containing nicks (PubMed:26807646). Also involved in response to replicative stress: recruited to stalled forks and is required to stabilize and restart stalled replication forks by restraining excessive fork regression, thereby suppressing their degradation (PubMed:31255466).</text>
</comment>
<comment type="catalytic activity">
    <reaction evidence="6 9">
        <text>Exonucleolytic cleavage in the 3'- to 5'-direction to yield nucleoside 5'-phosphates.</text>
        <dbReference type="EC" id="3.1.11.1"/>
    </reaction>
</comment>
<comment type="cofactor">
    <cofactor evidence="7 9">
        <name>Mg(2+)</name>
        <dbReference type="ChEBI" id="CHEBI:18420"/>
    </cofactor>
    <cofactor evidence="7 9">
        <name>Mn(2+)</name>
        <dbReference type="ChEBI" id="CHEBI:29035"/>
    </cofactor>
    <text evidence="7 9">Divalent metal cations; Mg(2+) or Mn(2+) (PubMed:31127291). Acts as a 3'-5' exoribonuclease in presence of Mg(2+), while it has no 3'-5' exodeoxyribonuclease activity (PubMed:29335528, PubMed:31127291). Has both as a 3'-5' exoribonuclease and exodeoxyribonuclease activities in presence of Mn(2+) (PubMed:31127291).</text>
</comment>
<comment type="subunit">
    <text evidence="6 9">Homodimer (PubMed:31127291). Interacts with RBBP8, MRE11 and BRCA1 (PubMed:26807646).</text>
</comment>
<comment type="interaction">
    <interactant intactId="EBI-11324738">
        <id>Q9NVH0</id>
    </interactant>
    <interactant intactId="EBI-745715">
        <id>Q99708</id>
        <label>RBBP8</label>
    </interactant>
    <organismsDiffer>false</organismsDiffer>
    <experiments>3</experiments>
</comment>
<comment type="subcellular location">
    <subcellularLocation>
        <location evidence="8 9">Mitochondrion outer membrane</location>
        <topology evidence="1 9">Single-pass membrane protein</topology>
    </subcellularLocation>
    <subcellularLocation>
        <location evidence="7">Mitochondrion matrix</location>
    </subcellularLocation>
    <subcellularLocation>
        <location evidence="6">Nucleus</location>
    </subcellularLocation>
    <subcellularLocation>
        <location evidence="6 10">Chromosome</location>
    </subcellularLocation>
    <text evidence="6 8 9 10">Mainly localizes to the mitochondrial outer membrane (PubMed:29599527, PubMed:31127291). May translocate to the nucleus in response to DNA damage; however mechanism that explain nuclear localization are unknown and require experimental evidences (PubMed:26807646). Recruited to replication forks following replication stress (PubMed:31255466).</text>
</comment>
<comment type="alternative products">
    <event type="alternative splicing"/>
    <isoform>
        <id>Q9NVH0-1</id>
        <name>1</name>
        <sequence type="displayed"/>
    </isoform>
    <isoform>
        <id>Q9NVH0-2</id>
        <name>2</name>
        <sequence type="described" ref="VSP_044367"/>
    </isoform>
</comment>
<comment type="similarity">
    <text evidence="15">Belongs to the EXD2 family.</text>
</comment>
<comment type="caution">
    <text evidence="6 7 8 9 10 15">Subcellular location is subject to discussion. Different publications report a mitochondrial localization (PubMed:29335528, PubMed:29599527, PubMed:31127291). According to some reports, tranlocates to the nucleus in response of DNA damage (PubMed:26807646, PubMed:31255466). However, according to another publication, DNA damage does not result in nuclear translocation (PubMed:31127291). Its precise localization in mitochondrion is also controversial (PubMed:29335528, PubMed:29599527, PubMed:31127291). Two different groups report a localization to the mitochondrial outer membrane, which is consistent with the presence of a N-terminal transmembrane region (PubMed:29599527, PubMed:31127291). In contrast, a publication reports localization to the mitochondrial matrix; protease accessibility used in this assay can however lead to misinterpretation if the target protein is unexpectedly resistant to proteases (PubMed:29335528). Mechanisms that explain its dual role in mitochondrion and nuclear DNA repair are unknown and additional evidences are needed to reconciliate these two apparently incompatible functions.</text>
</comment>
<comment type="sequence caution" evidence="15">
    <conflict type="frameshift">
        <sequence resource="EMBL-CDS" id="CAH10568"/>
    </conflict>
</comment>
<gene>
    <name evidence="14 17" type="primary">EXD2</name>
    <name evidence="17" type="synonym">C14orf114</name>
    <name evidence="14" type="synonym">EXDL2</name>
</gene>
<evidence type="ECO:0000255" key="1"/>
<evidence type="ECO:0000256" key="2">
    <source>
        <dbReference type="SAM" id="MobiDB-lite"/>
    </source>
</evidence>
<evidence type="ECO:0000269" key="3">
    <source>
    </source>
</evidence>
<evidence type="ECO:0000269" key="4">
    <source>
    </source>
</evidence>
<evidence type="ECO:0000269" key="5">
    <source>
    </source>
</evidence>
<evidence type="ECO:0000269" key="6">
    <source>
    </source>
</evidence>
<evidence type="ECO:0000269" key="7">
    <source>
    </source>
</evidence>
<evidence type="ECO:0000269" key="8">
    <source>
    </source>
</evidence>
<evidence type="ECO:0000269" key="9">
    <source>
    </source>
</evidence>
<evidence type="ECO:0000269" key="10">
    <source>
    </source>
</evidence>
<evidence type="ECO:0000303" key="11">
    <source>
    </source>
</evidence>
<evidence type="ECO:0000303" key="12">
    <source>
    </source>
</evidence>
<evidence type="ECO:0000303" key="13">
    <source>
    </source>
</evidence>
<evidence type="ECO:0000303" key="14">
    <source>
    </source>
</evidence>
<evidence type="ECO:0000305" key="15"/>
<evidence type="ECO:0000305" key="16">
    <source>
    </source>
</evidence>
<evidence type="ECO:0000312" key="17">
    <source>
        <dbReference type="HGNC" id="HGNC:20217"/>
    </source>
</evidence>
<evidence type="ECO:0007744" key="18">
    <source>
        <dbReference type="PDB" id="6K18"/>
    </source>
</evidence>
<evidence type="ECO:0007744" key="19">
    <source>
        <dbReference type="PDB" id="6K19"/>
    </source>
</evidence>
<evidence type="ECO:0007744" key="20">
    <source>
        <dbReference type="PDB" id="6K1A"/>
    </source>
</evidence>
<evidence type="ECO:0007744" key="21">
    <source>
        <dbReference type="PDB" id="6K1B"/>
    </source>
</evidence>
<evidence type="ECO:0007744" key="22">
    <source>
        <dbReference type="PDB" id="6K1C"/>
    </source>
</evidence>
<evidence type="ECO:0007744" key="23">
    <source>
        <dbReference type="PDB" id="6K1D"/>
    </source>
</evidence>
<evidence type="ECO:0007744" key="24">
    <source>
        <dbReference type="PDB" id="6K1E"/>
    </source>
</evidence>
<evidence type="ECO:0007829" key="25">
    <source>
        <dbReference type="PDB" id="6K17"/>
    </source>
</evidence>
<evidence type="ECO:0007829" key="26">
    <source>
        <dbReference type="PDB" id="6K18"/>
    </source>
</evidence>
<evidence type="ECO:0007829" key="27">
    <source>
        <dbReference type="PDB" id="6K19"/>
    </source>
</evidence>
<reference key="1">
    <citation type="journal article" date="2004" name="Nat. Genet.">
        <title>Complete sequencing and characterization of 21,243 full-length human cDNAs.</title>
        <authorList>
            <person name="Ota T."/>
            <person name="Suzuki Y."/>
            <person name="Nishikawa T."/>
            <person name="Otsuki T."/>
            <person name="Sugiyama T."/>
            <person name="Irie R."/>
            <person name="Wakamatsu A."/>
            <person name="Hayashi K."/>
            <person name="Sato H."/>
            <person name="Nagai K."/>
            <person name="Kimura K."/>
            <person name="Makita H."/>
            <person name="Sekine M."/>
            <person name="Obayashi M."/>
            <person name="Nishi T."/>
            <person name="Shibahara T."/>
            <person name="Tanaka T."/>
            <person name="Ishii S."/>
            <person name="Yamamoto J."/>
            <person name="Saito K."/>
            <person name="Kawai Y."/>
            <person name="Isono Y."/>
            <person name="Nakamura Y."/>
            <person name="Nagahari K."/>
            <person name="Murakami K."/>
            <person name="Yasuda T."/>
            <person name="Iwayanagi T."/>
            <person name="Wagatsuma M."/>
            <person name="Shiratori A."/>
            <person name="Sudo H."/>
            <person name="Hosoiri T."/>
            <person name="Kaku Y."/>
            <person name="Kodaira H."/>
            <person name="Kondo H."/>
            <person name="Sugawara M."/>
            <person name="Takahashi M."/>
            <person name="Kanda K."/>
            <person name="Yokoi T."/>
            <person name="Furuya T."/>
            <person name="Kikkawa E."/>
            <person name="Omura Y."/>
            <person name="Abe K."/>
            <person name="Kamihara K."/>
            <person name="Katsuta N."/>
            <person name="Sato K."/>
            <person name="Tanikawa M."/>
            <person name="Yamazaki M."/>
            <person name="Ninomiya K."/>
            <person name="Ishibashi T."/>
            <person name="Yamashita H."/>
            <person name="Murakawa K."/>
            <person name="Fujimori K."/>
            <person name="Tanai H."/>
            <person name="Kimata M."/>
            <person name="Watanabe M."/>
            <person name="Hiraoka S."/>
            <person name="Chiba Y."/>
            <person name="Ishida S."/>
            <person name="Ono Y."/>
            <person name="Takiguchi S."/>
            <person name="Watanabe S."/>
            <person name="Yosida M."/>
            <person name="Hotuta T."/>
            <person name="Kusano J."/>
            <person name="Kanehori K."/>
            <person name="Takahashi-Fujii A."/>
            <person name="Hara H."/>
            <person name="Tanase T.-O."/>
            <person name="Nomura Y."/>
            <person name="Togiya S."/>
            <person name="Komai F."/>
            <person name="Hara R."/>
            <person name="Takeuchi K."/>
            <person name="Arita M."/>
            <person name="Imose N."/>
            <person name="Musashino K."/>
            <person name="Yuuki H."/>
            <person name="Oshima A."/>
            <person name="Sasaki N."/>
            <person name="Aotsuka S."/>
            <person name="Yoshikawa Y."/>
            <person name="Matsunawa H."/>
            <person name="Ichihara T."/>
            <person name="Shiohata N."/>
            <person name="Sano S."/>
            <person name="Moriya S."/>
            <person name="Momiyama H."/>
            <person name="Satoh N."/>
            <person name="Takami S."/>
            <person name="Terashima Y."/>
            <person name="Suzuki O."/>
            <person name="Nakagawa S."/>
            <person name="Senoh A."/>
            <person name="Mizoguchi H."/>
            <person name="Goto Y."/>
            <person name="Shimizu F."/>
            <person name="Wakebe H."/>
            <person name="Hishigaki H."/>
            <person name="Watanabe T."/>
            <person name="Sugiyama A."/>
            <person name="Takemoto M."/>
            <person name="Kawakami B."/>
            <person name="Yamazaki M."/>
            <person name="Watanabe K."/>
            <person name="Kumagai A."/>
            <person name="Itakura S."/>
            <person name="Fukuzumi Y."/>
            <person name="Fujimori Y."/>
            <person name="Komiyama M."/>
            <person name="Tashiro H."/>
            <person name="Tanigami A."/>
            <person name="Fujiwara T."/>
            <person name="Ono T."/>
            <person name="Yamada K."/>
            <person name="Fujii Y."/>
            <person name="Ozaki K."/>
            <person name="Hirao M."/>
            <person name="Ohmori Y."/>
            <person name="Kawabata A."/>
            <person name="Hikiji T."/>
            <person name="Kobatake N."/>
            <person name="Inagaki H."/>
            <person name="Ikema Y."/>
            <person name="Okamoto S."/>
            <person name="Okitani R."/>
            <person name="Kawakami T."/>
            <person name="Noguchi S."/>
            <person name="Itoh T."/>
            <person name="Shigeta K."/>
            <person name="Senba T."/>
            <person name="Matsumura K."/>
            <person name="Nakajima Y."/>
            <person name="Mizuno T."/>
            <person name="Morinaga M."/>
            <person name="Sasaki M."/>
            <person name="Togashi T."/>
            <person name="Oyama M."/>
            <person name="Hata H."/>
            <person name="Watanabe M."/>
            <person name="Komatsu T."/>
            <person name="Mizushima-Sugano J."/>
            <person name="Satoh T."/>
            <person name="Shirai Y."/>
            <person name="Takahashi Y."/>
            <person name="Nakagawa K."/>
            <person name="Okumura K."/>
            <person name="Nagase T."/>
            <person name="Nomura N."/>
            <person name="Kikuchi H."/>
            <person name="Masuho Y."/>
            <person name="Yamashita R."/>
            <person name="Nakai K."/>
            <person name="Yada T."/>
            <person name="Nakamura Y."/>
            <person name="Ohara O."/>
            <person name="Isogai T."/>
            <person name="Sugano S."/>
        </authorList>
    </citation>
    <scope>NUCLEOTIDE SEQUENCE [LARGE SCALE MRNA] (ISOFORMS 1 AND 2)</scope>
    <scope>VARIANT HIS-518</scope>
    <source>
        <tissue>Hippocampus</tissue>
        <tissue>Teratocarcinoma</tissue>
    </source>
</reference>
<reference key="2">
    <citation type="journal article" date="2007" name="BMC Genomics">
        <title>The full-ORF clone resource of the German cDNA consortium.</title>
        <authorList>
            <person name="Bechtel S."/>
            <person name="Rosenfelder H."/>
            <person name="Duda A."/>
            <person name="Schmidt C.P."/>
            <person name="Ernst U."/>
            <person name="Wellenreuther R."/>
            <person name="Mehrle A."/>
            <person name="Schuster C."/>
            <person name="Bahr A."/>
            <person name="Bloecker H."/>
            <person name="Heubner D."/>
            <person name="Hoerlein A."/>
            <person name="Michel G."/>
            <person name="Wedler H."/>
            <person name="Koehrer K."/>
            <person name="Ottenwaelder B."/>
            <person name="Poustka A."/>
            <person name="Wiemann S."/>
            <person name="Schupp I."/>
        </authorList>
    </citation>
    <scope>NUCLEOTIDE SEQUENCE [LARGE SCALE MRNA] (ISOFORMS 1 AND 2)</scope>
    <scope>VARIANT HIS-518</scope>
    <source>
        <tissue>Endometrium</tissue>
        <tissue>Melanoma</tissue>
    </source>
</reference>
<reference key="3">
    <citation type="journal article" date="2003" name="Nature">
        <title>The DNA sequence and analysis of human chromosome 14.</title>
        <authorList>
            <person name="Heilig R."/>
            <person name="Eckenberg R."/>
            <person name="Petit J.-L."/>
            <person name="Fonknechten N."/>
            <person name="Da Silva C."/>
            <person name="Cattolico L."/>
            <person name="Levy M."/>
            <person name="Barbe V."/>
            <person name="De Berardinis V."/>
            <person name="Ureta-Vidal A."/>
            <person name="Pelletier E."/>
            <person name="Vico V."/>
            <person name="Anthouard V."/>
            <person name="Rowen L."/>
            <person name="Madan A."/>
            <person name="Qin S."/>
            <person name="Sun H."/>
            <person name="Du H."/>
            <person name="Pepin K."/>
            <person name="Artiguenave F."/>
            <person name="Robert C."/>
            <person name="Cruaud C."/>
            <person name="Bruels T."/>
            <person name="Jaillon O."/>
            <person name="Friedlander L."/>
            <person name="Samson G."/>
            <person name="Brottier P."/>
            <person name="Cure S."/>
            <person name="Segurens B."/>
            <person name="Aniere F."/>
            <person name="Samain S."/>
            <person name="Crespeau H."/>
            <person name="Abbasi N."/>
            <person name="Aiach N."/>
            <person name="Boscus D."/>
            <person name="Dickhoff R."/>
            <person name="Dors M."/>
            <person name="Dubois I."/>
            <person name="Friedman C."/>
            <person name="Gouyvenoux M."/>
            <person name="James R."/>
            <person name="Madan A."/>
            <person name="Mairey-Estrada B."/>
            <person name="Mangenot S."/>
            <person name="Martins N."/>
            <person name="Menard M."/>
            <person name="Oztas S."/>
            <person name="Ratcliffe A."/>
            <person name="Shaffer T."/>
            <person name="Trask B."/>
            <person name="Vacherie B."/>
            <person name="Bellemere C."/>
            <person name="Belser C."/>
            <person name="Besnard-Gonnet M."/>
            <person name="Bartol-Mavel D."/>
            <person name="Boutard M."/>
            <person name="Briez-Silla S."/>
            <person name="Combette S."/>
            <person name="Dufosse-Laurent V."/>
            <person name="Ferron C."/>
            <person name="Lechaplais C."/>
            <person name="Louesse C."/>
            <person name="Muselet D."/>
            <person name="Magdelenat G."/>
            <person name="Pateau E."/>
            <person name="Petit E."/>
            <person name="Sirvain-Trukniewicz P."/>
            <person name="Trybou A."/>
            <person name="Vega-Czarny N."/>
            <person name="Bataille E."/>
            <person name="Bluet E."/>
            <person name="Bordelais I."/>
            <person name="Dubois M."/>
            <person name="Dumont C."/>
            <person name="Guerin T."/>
            <person name="Haffray S."/>
            <person name="Hammadi R."/>
            <person name="Muanga J."/>
            <person name="Pellouin V."/>
            <person name="Robert D."/>
            <person name="Wunderle E."/>
            <person name="Gauguet G."/>
            <person name="Roy A."/>
            <person name="Sainte-Marthe L."/>
            <person name="Verdier J."/>
            <person name="Verdier-Discala C."/>
            <person name="Hillier L.W."/>
            <person name="Fulton L."/>
            <person name="McPherson J."/>
            <person name="Matsuda F."/>
            <person name="Wilson R."/>
            <person name="Scarpelli C."/>
            <person name="Gyapay G."/>
            <person name="Wincker P."/>
            <person name="Saurin W."/>
            <person name="Quetier F."/>
            <person name="Waterston R."/>
            <person name="Hood L."/>
            <person name="Weissenbach J."/>
        </authorList>
    </citation>
    <scope>NUCLEOTIDE SEQUENCE [LARGE SCALE GENOMIC DNA]</scope>
</reference>
<reference key="4">
    <citation type="submission" date="2005-07" db="EMBL/GenBank/DDBJ databases">
        <authorList>
            <person name="Mural R.J."/>
            <person name="Istrail S."/>
            <person name="Sutton G."/>
            <person name="Florea L."/>
            <person name="Halpern A.L."/>
            <person name="Mobarry C.M."/>
            <person name="Lippert R."/>
            <person name="Walenz B."/>
            <person name="Shatkay H."/>
            <person name="Dew I."/>
            <person name="Miller J.R."/>
            <person name="Flanigan M.J."/>
            <person name="Edwards N.J."/>
            <person name="Bolanos R."/>
            <person name="Fasulo D."/>
            <person name="Halldorsson B.V."/>
            <person name="Hannenhalli S."/>
            <person name="Turner R."/>
            <person name="Yooseph S."/>
            <person name="Lu F."/>
            <person name="Nusskern D.R."/>
            <person name="Shue B.C."/>
            <person name="Zheng X.H."/>
            <person name="Zhong F."/>
            <person name="Delcher A.L."/>
            <person name="Huson D.H."/>
            <person name="Kravitz S.A."/>
            <person name="Mouchard L."/>
            <person name="Reinert K."/>
            <person name="Remington K.A."/>
            <person name="Clark A.G."/>
            <person name="Waterman M.S."/>
            <person name="Eichler E.E."/>
            <person name="Adams M.D."/>
            <person name="Hunkapiller M.W."/>
            <person name="Myers E.W."/>
            <person name="Venter J.C."/>
        </authorList>
    </citation>
    <scope>NUCLEOTIDE SEQUENCE [LARGE SCALE GENOMIC DNA]</scope>
</reference>
<reference key="5">
    <citation type="journal article" date="2004" name="Genome Res.">
        <title>The status, quality, and expansion of the NIH full-length cDNA project: the Mammalian Gene Collection (MGC).</title>
        <authorList>
            <consortium name="The MGC Project Team"/>
        </authorList>
    </citation>
    <scope>NUCLEOTIDE SEQUENCE [LARGE SCALE MRNA] (ISOFORM 2)</scope>
    <source>
        <tissue>Lung</tissue>
    </source>
</reference>
<reference key="6">
    <citation type="journal article" date="2010" name="Mol. Cell">
        <title>A genetic screen identifies FAN1, a Fanconi anemia-associated nuclease necessary for DNA interstrand crosslink repair.</title>
        <authorList>
            <person name="Smogorzewska A."/>
            <person name="Desetty R."/>
            <person name="Saito T.T."/>
            <person name="Schlabach M."/>
            <person name="Lach F.P."/>
            <person name="Sowa M.E."/>
            <person name="Clark A.B."/>
            <person name="Kunkel T.A."/>
            <person name="Harper J.W."/>
            <person name="Colaiacovo M.P."/>
            <person name="Elledge S.J."/>
        </authorList>
    </citation>
    <scope>FUNCTION</scope>
</reference>
<reference key="7">
    <citation type="journal article" date="2011" name="BMC Syst. Biol.">
        <title>Initial characterization of the human central proteome.</title>
        <authorList>
            <person name="Burkard T.R."/>
            <person name="Planyavsky M."/>
            <person name="Kaupe I."/>
            <person name="Breitwieser F.P."/>
            <person name="Buerckstuemmer T."/>
            <person name="Bennett K.L."/>
            <person name="Superti-Furga G."/>
            <person name="Colinge J."/>
        </authorList>
    </citation>
    <scope>IDENTIFICATION BY MASS SPECTROMETRY [LARGE SCALE ANALYSIS]</scope>
</reference>
<reference key="8">
    <citation type="journal article" date="2016" name="Nat. Cell Biol.">
        <title>EXD2 promotes homologous recombination by facilitating DNA end resection.</title>
        <authorList>
            <person name="Broderick R."/>
            <person name="Nieminuszczy J."/>
            <person name="Baddock H.T."/>
            <person name="Deshpande R.A."/>
            <person name="Gileadi O."/>
            <person name="Paull T.T."/>
            <person name="McHugh P.J."/>
            <person name="Niedzwiedz W."/>
        </authorList>
    </citation>
    <scope>FUNCTION</scope>
    <scope>CATALYTIC ACTIVITY</scope>
    <scope>SUBCELLULAR LOCATION</scope>
    <scope>MUTAGENESIS OF 108-ASP--GLU-110</scope>
    <scope>INTERACTION WITH BRCA1; MRE11 AND RBBP8</scope>
</reference>
<reference key="9">
    <citation type="journal article" date="2018" name="Nat. Cell Biol.">
        <title>EXD2 governs germ stem cell homeostasis and lifespan by promoting mitoribosome integrity and translation.</title>
        <authorList>
            <person name="Silva J."/>
            <person name="Aivio S."/>
            <person name="Knobel P.A."/>
            <person name="Bailey L.J."/>
            <person name="Casali A."/>
            <person name="Vinaixa M."/>
            <person name="Garcia-Cao I."/>
            <person name="Coyaud E."/>
            <person name="Jourdain A.A."/>
            <person name="Perez-Ferreros P."/>
            <person name="Rojas A.M."/>
            <person name="Antolin-Fontes A."/>
            <person name="Samino-Gene S."/>
            <person name="Raught B."/>
            <person name="Gonzalez-Reyes A."/>
            <person name="Ribas de Pouplana L."/>
            <person name="Doherty A.J."/>
            <person name="Yanes O."/>
            <person name="Stracker T.H."/>
        </authorList>
    </citation>
    <scope>FUNCTION</scope>
    <scope>CATALYTIC ACTIVITY</scope>
    <scope>COFACTOR</scope>
</reference>
<reference key="10">
    <citation type="journal article" date="2018" name="Sci. Rep.">
        <title>The mitochondrial outer-membrane location of the EXD2 exonuclease contradicts its direct role in nuclear DNA repair.</title>
        <authorList>
            <person name="Hensen F."/>
            <person name="Moretton A."/>
            <person name="van Esveld S."/>
            <person name="Farge G."/>
            <person name="Spelbrink J.N."/>
        </authorList>
    </citation>
    <scope>SUBCELLULAR LOCATION</scope>
</reference>
<reference key="11">
    <citation type="journal article" date="2019" name="Mol. Cell">
        <title>EXD2 protects stressed replication forks and is required for cell viability in the absence of BRCA1/2.</title>
        <authorList>
            <person name="Nieminuszczy J."/>
            <person name="Broderick R."/>
            <person name="Bellani M.A."/>
            <person name="Smethurst E."/>
            <person name="Schwab R.A."/>
            <person name="Cherdyntseva V."/>
            <person name="Evmorfopoulou T."/>
            <person name="Lin Y.L."/>
            <person name="Minczuk M."/>
            <person name="Pasero P."/>
            <person name="Gagos S."/>
            <person name="Seidman M.M."/>
            <person name="Niedzwiedz W."/>
        </authorList>
    </citation>
    <scope>FUNCTION</scope>
    <scope>SUBCELLULAR LOCATION</scope>
    <scope>MUTAGENESIS OF 108-ASP--GLU-110</scope>
</reference>
<reference evidence="24" key="12">
    <citation type="journal article" date="2019" name="Nucleic Acids Res.">
        <title>The structure of human EXD2 reveals a chimeric 3' to 5' exonuclease domain that discriminates substrates via metal coordination.</title>
        <authorList>
            <person name="Park J."/>
            <person name="Lee S.Y."/>
            <person name="Jeong H."/>
            <person name="Kang M.G."/>
            <person name="Van Haute L."/>
            <person name="Minczuk M."/>
            <person name="Seo J.K."/>
            <person name="Jun Y."/>
            <person name="Myung K."/>
            <person name="Rhee H.W."/>
            <person name="Lee C."/>
        </authorList>
    </citation>
    <scope>X-RAY CRYSTALLOGRAPHY (1.60 ANGSTROMS) OF 76-295 IN COMPLEX WITH MAGNESIUM AND MANGANESE</scope>
    <scope>FUNCTION</scope>
    <scope>CATALYTIC ACTIVITY</scope>
    <scope>COFACTOR</scope>
    <scope>SUBUNIT</scope>
    <scope>SUBCELLULAR LOCATION</scope>
    <scope>TOPOLOGY</scope>
    <scope>MUTAGENESIS OF ARG-190; ARG-195; ARG-197; LYS-221 AND ARG-226</scope>
</reference>
<organism>
    <name type="scientific">Homo sapiens</name>
    <name type="common">Human</name>
    <dbReference type="NCBI Taxonomy" id="9606"/>
    <lineage>
        <taxon>Eukaryota</taxon>
        <taxon>Metazoa</taxon>
        <taxon>Chordata</taxon>
        <taxon>Craniata</taxon>
        <taxon>Vertebrata</taxon>
        <taxon>Euteleostomi</taxon>
        <taxon>Mammalia</taxon>
        <taxon>Eutheria</taxon>
        <taxon>Euarchontoglires</taxon>
        <taxon>Primates</taxon>
        <taxon>Haplorrhini</taxon>
        <taxon>Catarrhini</taxon>
        <taxon>Hominidae</taxon>
        <taxon>Homo</taxon>
    </lineage>
</organism>